<gene>
    <name type="primary">opuCA</name>
</gene>
<proteinExistence type="evidence at protein level"/>
<protein>
    <recommendedName>
        <fullName>Carnitine transport ATP-binding protein OpuCA</fullName>
        <ecNumber>7.6.2.9</ecNumber>
    </recommendedName>
</protein>
<keyword id="KW-0002">3D-structure</keyword>
<keyword id="KW-0067">ATP-binding</keyword>
<keyword id="KW-0129">CBS domain</keyword>
<keyword id="KW-0547">Nucleotide-binding</keyword>
<keyword id="KW-0677">Repeat</keyword>
<keyword id="KW-0346">Stress response</keyword>
<keyword id="KW-1278">Translocase</keyword>
<keyword id="KW-0813">Transport</keyword>
<evidence type="ECO:0000255" key="1">
    <source>
        <dbReference type="PROSITE-ProRule" id="PRU00434"/>
    </source>
</evidence>
<evidence type="ECO:0000255" key="2">
    <source>
        <dbReference type="PROSITE-ProRule" id="PRU00703"/>
    </source>
</evidence>
<evidence type="ECO:0000256" key="3">
    <source>
        <dbReference type="SAM" id="MobiDB-lite"/>
    </source>
</evidence>
<evidence type="ECO:0000269" key="4">
    <source>
    </source>
</evidence>
<evidence type="ECO:0000305" key="5"/>
<evidence type="ECO:0000305" key="6">
    <source>
    </source>
</evidence>
<evidence type="ECO:0007829" key="7">
    <source>
        <dbReference type="PDB" id="5KS7"/>
    </source>
</evidence>
<reference key="1">
    <citation type="journal article" date="2000" name="Appl. Environ. Microbiol.">
        <title>Identification and characterization of an ATP binding cassette L-carnitine transporter in Listeria monocytogenes.</title>
        <authorList>
            <person name="Fraser K.R."/>
            <person name="Harvie D."/>
            <person name="Coote P.J."/>
            <person name="O'Byrne C.P."/>
        </authorList>
    </citation>
    <scope>NUCLEOTIDE SEQUENCE [GENOMIC DNA]</scope>
    <scope>FUNCTION</scope>
    <scope>SUBUNIT</scope>
    <scope>DISRUPTION PHENOTYPE</scope>
    <source>
        <strain>EGD / Serotype 1/2a</strain>
    </source>
</reference>
<comment type="function">
    <text evidence="4">Part of the ABC transporter complex OpuCABCD involved in carnitine uptake. Probably responsible for energy coupling to the transport system. Involved, with BetL and GbuABC, in osmoprotection and cryoprotection of Listeria.</text>
</comment>
<comment type="catalytic activity">
    <reaction>
        <text>a quaternary ammonium(out) + ATP + H2O = a quaternary ammonium(in) + ADP + phosphate + H(+)</text>
        <dbReference type="Rhea" id="RHEA:11036"/>
        <dbReference type="ChEBI" id="CHEBI:15377"/>
        <dbReference type="ChEBI" id="CHEBI:15378"/>
        <dbReference type="ChEBI" id="CHEBI:30616"/>
        <dbReference type="ChEBI" id="CHEBI:35267"/>
        <dbReference type="ChEBI" id="CHEBI:43474"/>
        <dbReference type="ChEBI" id="CHEBI:456216"/>
        <dbReference type="EC" id="7.6.2.9"/>
    </reaction>
</comment>
<comment type="subunit">
    <text evidence="6">The complex is composed of two ATP-binding proteins (OpuCA), two transmembrane proteins (OpuCB and OpuCD) and a solute-binding protein (OpuCC).</text>
</comment>
<comment type="disruption phenotype">
    <text evidence="4">Mutants are impaired for growth at high osmolarity in brain heart infusion broth, fail to grow in a defined medium and show no detectable carnitine uptake.</text>
</comment>
<comment type="similarity">
    <text evidence="5">Belongs to the ABC transporter superfamily.</text>
</comment>
<accession>Q9KHT9</accession>
<organism>
    <name type="scientific">Listeria monocytogenes</name>
    <dbReference type="NCBI Taxonomy" id="1639"/>
    <lineage>
        <taxon>Bacteria</taxon>
        <taxon>Bacillati</taxon>
        <taxon>Bacillota</taxon>
        <taxon>Bacilli</taxon>
        <taxon>Bacillales</taxon>
        <taxon>Listeriaceae</taxon>
        <taxon>Listeria</taxon>
    </lineage>
</organism>
<feature type="chain" id="PRO_0000418132" description="Carnitine transport ATP-binding protein OpuCA">
    <location>
        <begin position="1"/>
        <end position="397"/>
    </location>
</feature>
<feature type="domain" description="ABC transporter" evidence="1">
    <location>
        <begin position="2"/>
        <end position="236"/>
    </location>
</feature>
<feature type="domain" description="CBS 1" evidence="2">
    <location>
        <begin position="255"/>
        <end position="311"/>
    </location>
</feature>
<feature type="domain" description="CBS 2" evidence="2">
    <location>
        <begin position="315"/>
        <end position="373"/>
    </location>
</feature>
<feature type="region of interest" description="Disordered" evidence="3">
    <location>
        <begin position="377"/>
        <end position="397"/>
    </location>
</feature>
<feature type="compositionally biased region" description="Basic and acidic residues" evidence="3">
    <location>
        <begin position="384"/>
        <end position="397"/>
    </location>
</feature>
<feature type="binding site" evidence="1">
    <location>
        <begin position="35"/>
        <end position="42"/>
    </location>
    <ligand>
        <name>ATP</name>
        <dbReference type="ChEBI" id="CHEBI:30616"/>
    </ligand>
</feature>
<feature type="helix" evidence="7">
    <location>
        <begin position="251"/>
        <end position="254"/>
    </location>
</feature>
<feature type="strand" evidence="7">
    <location>
        <begin position="255"/>
        <end position="257"/>
    </location>
</feature>
<feature type="helix" evidence="7">
    <location>
        <begin position="268"/>
        <end position="278"/>
    </location>
</feature>
<feature type="strand" evidence="7">
    <location>
        <begin position="281"/>
        <end position="286"/>
    </location>
</feature>
<feature type="strand" evidence="7">
    <location>
        <begin position="291"/>
        <end position="297"/>
    </location>
</feature>
<feature type="helix" evidence="7">
    <location>
        <begin position="298"/>
        <end position="304"/>
    </location>
</feature>
<feature type="helix" evidence="7">
    <location>
        <begin position="305"/>
        <end position="307"/>
    </location>
</feature>
<feature type="helix" evidence="7">
    <location>
        <begin position="311"/>
        <end position="314"/>
    </location>
</feature>
<feature type="helix" evidence="7">
    <location>
        <begin position="328"/>
        <end position="338"/>
    </location>
</feature>
<feature type="strand" evidence="7">
    <location>
        <begin position="343"/>
        <end position="346"/>
    </location>
</feature>
<feature type="strand" evidence="7">
    <location>
        <begin position="351"/>
        <end position="356"/>
    </location>
</feature>
<feature type="helix" evidence="7">
    <location>
        <begin position="359"/>
        <end position="367"/>
    </location>
</feature>
<name>OPUCA_LISMN</name>
<dbReference type="EC" id="7.6.2.9"/>
<dbReference type="EMBL" id="AF249729">
    <property type="protein sequence ID" value="AAF91339.1"/>
    <property type="molecule type" value="Genomic_DNA"/>
</dbReference>
<dbReference type="PIR" id="AD1253">
    <property type="entry name" value="AD1253"/>
</dbReference>
<dbReference type="RefSeq" id="WP_003721933.1">
    <property type="nucleotide sequence ID" value="NZ_WUEC01000001.1"/>
</dbReference>
<dbReference type="PDB" id="5KS7">
    <property type="method" value="X-ray"/>
    <property type="resolution" value="2.90 A"/>
    <property type="chains" value="A/B=247-372"/>
</dbReference>
<dbReference type="PDBsum" id="5KS7"/>
<dbReference type="SMR" id="Q9KHT9"/>
<dbReference type="eggNOG" id="COG0517">
    <property type="taxonomic scope" value="Bacteria"/>
</dbReference>
<dbReference type="eggNOG" id="COG1125">
    <property type="taxonomic scope" value="Bacteria"/>
</dbReference>
<dbReference type="OMA" id="MYEFNRA"/>
<dbReference type="GO" id="GO:0016020">
    <property type="term" value="C:membrane"/>
    <property type="evidence" value="ECO:0007669"/>
    <property type="project" value="InterPro"/>
</dbReference>
<dbReference type="GO" id="GO:0015418">
    <property type="term" value="F:ABC-type quaternary ammonium compound transporting activity"/>
    <property type="evidence" value="ECO:0007669"/>
    <property type="project" value="UniProtKB-EC"/>
</dbReference>
<dbReference type="GO" id="GO:0005524">
    <property type="term" value="F:ATP binding"/>
    <property type="evidence" value="ECO:0007669"/>
    <property type="project" value="UniProtKB-KW"/>
</dbReference>
<dbReference type="GO" id="GO:0016887">
    <property type="term" value="F:ATP hydrolysis activity"/>
    <property type="evidence" value="ECO:0007669"/>
    <property type="project" value="InterPro"/>
</dbReference>
<dbReference type="GO" id="GO:0031460">
    <property type="term" value="P:glycine betaine transport"/>
    <property type="evidence" value="ECO:0007669"/>
    <property type="project" value="InterPro"/>
</dbReference>
<dbReference type="CDD" id="cd03295">
    <property type="entry name" value="ABC_OpuCA_Osmoprotection"/>
    <property type="match status" value="1"/>
</dbReference>
<dbReference type="CDD" id="cd04583">
    <property type="entry name" value="CBS_pair_ABC_OpuCA_assoc"/>
    <property type="match status" value="1"/>
</dbReference>
<dbReference type="FunFam" id="3.40.50.300:FF:000425">
    <property type="entry name" value="Probable ABC transporter, ATP-binding subunit"/>
    <property type="match status" value="1"/>
</dbReference>
<dbReference type="Gene3D" id="3.10.580.10">
    <property type="entry name" value="CBS-domain"/>
    <property type="match status" value="1"/>
</dbReference>
<dbReference type="Gene3D" id="3.40.50.300">
    <property type="entry name" value="P-loop containing nucleotide triphosphate hydrolases"/>
    <property type="match status" value="1"/>
</dbReference>
<dbReference type="InterPro" id="IPR003593">
    <property type="entry name" value="AAA+_ATPase"/>
</dbReference>
<dbReference type="InterPro" id="IPR003439">
    <property type="entry name" value="ABC_transporter-like_ATP-bd"/>
</dbReference>
<dbReference type="InterPro" id="IPR017871">
    <property type="entry name" value="ABC_transporter-like_CS"/>
</dbReference>
<dbReference type="InterPro" id="IPR000644">
    <property type="entry name" value="CBS_dom"/>
</dbReference>
<dbReference type="InterPro" id="IPR046342">
    <property type="entry name" value="CBS_dom_sf"/>
</dbReference>
<dbReference type="InterPro" id="IPR005892">
    <property type="entry name" value="Gly-betaine_transp_ATP-bd"/>
</dbReference>
<dbReference type="InterPro" id="IPR027417">
    <property type="entry name" value="P-loop_NTPase"/>
</dbReference>
<dbReference type="NCBIfam" id="TIGR01186">
    <property type="entry name" value="proV"/>
    <property type="match status" value="1"/>
</dbReference>
<dbReference type="PANTHER" id="PTHR43117:SF3">
    <property type="entry name" value="CHOLINE TRANSPORT ATP-BINDING PROTEIN OPUBA"/>
    <property type="match status" value="1"/>
</dbReference>
<dbReference type="PANTHER" id="PTHR43117">
    <property type="entry name" value="OSMOPROTECTANT IMPORT ATP-BINDING PROTEIN OSMV"/>
    <property type="match status" value="1"/>
</dbReference>
<dbReference type="Pfam" id="PF00005">
    <property type="entry name" value="ABC_tran"/>
    <property type="match status" value="1"/>
</dbReference>
<dbReference type="Pfam" id="PF00571">
    <property type="entry name" value="CBS"/>
    <property type="match status" value="2"/>
</dbReference>
<dbReference type="SMART" id="SM00382">
    <property type="entry name" value="AAA"/>
    <property type="match status" value="1"/>
</dbReference>
<dbReference type="SMART" id="SM00116">
    <property type="entry name" value="CBS"/>
    <property type="match status" value="2"/>
</dbReference>
<dbReference type="SUPFAM" id="SSF54631">
    <property type="entry name" value="CBS-domain pair"/>
    <property type="match status" value="1"/>
</dbReference>
<dbReference type="SUPFAM" id="SSF52540">
    <property type="entry name" value="P-loop containing nucleoside triphosphate hydrolases"/>
    <property type="match status" value="1"/>
</dbReference>
<dbReference type="PROSITE" id="PS00211">
    <property type="entry name" value="ABC_TRANSPORTER_1"/>
    <property type="match status" value="1"/>
</dbReference>
<dbReference type="PROSITE" id="PS50893">
    <property type="entry name" value="ABC_TRANSPORTER_2"/>
    <property type="match status" value="1"/>
</dbReference>
<dbReference type="PROSITE" id="PS51371">
    <property type="entry name" value="CBS"/>
    <property type="match status" value="2"/>
</dbReference>
<sequence length="397" mass="45209">MLKFEHVTKTYKGGKKAVNDLTLNIDKGEFVCFIGPSGCGKTTTMKMINRLIEPTEGKIFINDKDIMAEDPVKLRRSIGYVIQQIGLMPHMTIRENIVLVPKLLKWSEEKKQERAKELIKLVDLPEEFLDRYPYELSGGQQQRIGVLRALAAEQNLILMDEPFGALDPITRDSLQEEFKNLQKELGKTIIFVTHDMDEAIKLADRIVIMKDGEIVQFDTPDEILRNPANSFVEDFIGKDRLIEAKPDVTQVAQIMNTNPVSITADKSLQAAITVMKEKRVDTLLVVDEGNVLKGFIDVEQIDLNRRTATSVMDIIEKNVFYVYEDTLLRDTVQRILKRGYKYIPVVDKDKRLVGIVTRASLVDIVYDSIWGTLEDATENQEEQADSKTTEPEMKQEG</sequence>